<feature type="chain" id="PRO_0000056493" description="Alpha-aminoadipic semialdehyde dehydrogenase">
    <location>
        <begin position="1"/>
        <end position="18" status="greater than"/>
    </location>
</feature>
<feature type="non-terminal residue" evidence="2">
    <location>
        <position position="18"/>
    </location>
</feature>
<reference evidence="3" key="1">
    <citation type="journal article" date="2002" name="FEBS Lett.">
        <title>First purification of the antiquitin protein and demonstration of its enzymatic activity.</title>
        <authorList>
            <person name="Tang W.-K."/>
            <person name="Cheng C.H.K."/>
            <person name="Fong W.-P."/>
        </authorList>
    </citation>
    <scope>PROTEIN SEQUENCE</scope>
    <scope>CATALYTIC ACTIVITY</scope>
    <scope>SUBUNIT</scope>
    <source>
        <tissue>Liver</tissue>
    </source>
</reference>
<evidence type="ECO:0000269" key="1">
    <source>
    </source>
</evidence>
<evidence type="ECO:0000303" key="2">
    <source>
    </source>
</evidence>
<evidence type="ECO:0000305" key="3"/>
<dbReference type="EC" id="1.2.1.31"/>
<dbReference type="GO" id="GO:0004029">
    <property type="term" value="F:aldehyde dehydrogenase (NAD+) activity"/>
    <property type="evidence" value="ECO:0000314"/>
    <property type="project" value="UniProtKB"/>
</dbReference>
<dbReference type="GO" id="GO:0004043">
    <property type="term" value="F:L-aminoadipate-semialdehyde dehydrogenase activity"/>
    <property type="evidence" value="ECO:0007669"/>
    <property type="project" value="UniProtKB-EC"/>
</dbReference>
<dbReference type="GO" id="GO:0006081">
    <property type="term" value="P:aldehyde metabolic process"/>
    <property type="evidence" value="ECO:0000314"/>
    <property type="project" value="UniProtKB"/>
</dbReference>
<accession>P83402</accession>
<organism evidence="3">
    <name type="scientific">Acanthopagrus schlegelii</name>
    <name type="common">Black porgy</name>
    <dbReference type="NCBI Taxonomy" id="72011"/>
    <lineage>
        <taxon>Eukaryota</taxon>
        <taxon>Metazoa</taxon>
        <taxon>Chordata</taxon>
        <taxon>Craniata</taxon>
        <taxon>Vertebrata</taxon>
        <taxon>Euteleostomi</taxon>
        <taxon>Actinopterygii</taxon>
        <taxon>Neopterygii</taxon>
        <taxon>Teleostei</taxon>
        <taxon>Neoteleostei</taxon>
        <taxon>Acanthomorphata</taxon>
        <taxon>Eupercaria</taxon>
        <taxon>Spariformes</taxon>
        <taxon>Sparidae</taxon>
        <taxon>Acanthopagrus</taxon>
    </lineage>
</organism>
<sequence length="18" mass="2059">SGLLINQPKYSWLKELGL</sequence>
<keyword id="KW-0903">Direct protein sequencing</keyword>
<keyword id="KW-0520">NAD</keyword>
<keyword id="KW-0560">Oxidoreductase</keyword>
<proteinExistence type="evidence at protein level"/>
<name>AL7A1_ACASC</name>
<comment type="catalytic activity">
    <reaction evidence="1">
        <text>(S)-2-amino-6-oxohexanoate + NADP(+) + H2O = L-2-aminoadipate + NADPH + 2 H(+)</text>
        <dbReference type="Rhea" id="RHEA:12304"/>
        <dbReference type="ChEBI" id="CHEBI:15377"/>
        <dbReference type="ChEBI" id="CHEBI:15378"/>
        <dbReference type="ChEBI" id="CHEBI:57783"/>
        <dbReference type="ChEBI" id="CHEBI:58321"/>
        <dbReference type="ChEBI" id="CHEBI:58349"/>
        <dbReference type="ChEBI" id="CHEBI:58672"/>
        <dbReference type="EC" id="1.2.1.31"/>
    </reaction>
</comment>
<comment type="catalytic activity">
    <reaction evidence="1">
        <text>(S)-2-amino-6-oxohexanoate + NAD(+) + H2O = L-2-aminoadipate + NADH + 2 H(+)</text>
        <dbReference type="Rhea" id="RHEA:12308"/>
        <dbReference type="ChEBI" id="CHEBI:15377"/>
        <dbReference type="ChEBI" id="CHEBI:15378"/>
        <dbReference type="ChEBI" id="CHEBI:57540"/>
        <dbReference type="ChEBI" id="CHEBI:57945"/>
        <dbReference type="ChEBI" id="CHEBI:58321"/>
        <dbReference type="ChEBI" id="CHEBI:58672"/>
        <dbReference type="EC" id="1.2.1.31"/>
    </reaction>
</comment>
<comment type="biophysicochemical properties">
    <kinetics>
        <KM>2 mM for acetaldehyde</KM>
        <Vmax>1.3 umol/min/mg enzyme</Vmax>
    </kinetics>
    <phDependence>
        <text>Optimum pH is 9-10.</text>
    </phDependence>
</comment>
<comment type="subunit">
    <text evidence="1">Homotetramer.</text>
</comment>
<comment type="similarity">
    <text evidence="3">Belongs to the aldehyde dehydrogenase family.</text>
</comment>
<protein>
    <recommendedName>
        <fullName>Alpha-aminoadipic semialdehyde dehydrogenase</fullName>
        <shortName>Alpha-AASA dehydrogenase</shortName>
        <ecNumber>1.2.1.31</ecNumber>
    </recommendedName>
    <alternativeName>
        <fullName>Aldehyde dehydrogenase family 7 member A1</fullName>
    </alternativeName>
    <alternativeName>
        <fullName>Antiquitin-1</fullName>
    </alternativeName>
    <alternativeName>
        <fullName>Delta1-piperideine-6-carboxylate dehydrogenase</fullName>
        <shortName>P6c dehydrogenase</shortName>
    </alternativeName>
</protein>
<gene>
    <name type="primary">aldh7a1</name>
</gene>